<gene>
    <name type="primary">rmuC</name>
    <name type="ordered locus">RP690</name>
</gene>
<sequence>MPSLLLLTTTILLILCVLIIWFYIKTHTLKRQLQFLSEQNLEINNNNRLLNQEKIAYLQKIEQLKCKVEYQEQMIKDSEKIREESFTSAKAALFDLGKDLSKQLIEIHKIENNTARELAEQNITTASRKFNSELERLITMVGALNKDIEQSKSTVDLIKQSLLSPIGAGLLSEITLENILKSSGLRPNLDFIMQYGLTTSDSVKLRPDAIIFLPSGNLMVIDSKASKFLVDSQDNSVNLSKTMNYHLKSLANKDYAENILTTLNKKAHNFNNVITLMFLPTEQAVEKVIAANPEFLQKAWGCNIFPVGPAGLMNMLSFAKFQITDNRRSENYKVIISEVRKLLSSIGTIADYSKKIGYNLQNMVTNYDKFAASFNRNLMSRVKTIQKLGIDSGDKAMPATLERYQIVSSKSEIIEVDAENPTQIEE</sequence>
<name>RMUC_RICPR</name>
<protein>
    <recommendedName>
        <fullName>DNA recombination protein RmuC homolog</fullName>
    </recommendedName>
</protein>
<comment type="function">
    <text evidence="1">Involved in DNA recombination.</text>
</comment>
<comment type="similarity">
    <text evidence="3">Belongs to the RmuC family.</text>
</comment>
<reference key="1">
    <citation type="journal article" date="1998" name="Nature">
        <title>The genome sequence of Rickettsia prowazekii and the origin of mitochondria.</title>
        <authorList>
            <person name="Andersson S.G.E."/>
            <person name="Zomorodipour A."/>
            <person name="Andersson J.O."/>
            <person name="Sicheritz-Ponten T."/>
            <person name="Alsmark U.C.M."/>
            <person name="Podowski R.M."/>
            <person name="Naeslund A.K."/>
            <person name="Eriksson A.-S."/>
            <person name="Winkler H.H."/>
            <person name="Kurland C.G."/>
        </authorList>
    </citation>
    <scope>NUCLEOTIDE SEQUENCE [LARGE SCALE GENOMIC DNA]</scope>
    <source>
        <strain>Madrid E</strain>
    </source>
</reference>
<organism>
    <name type="scientific">Rickettsia prowazekii (strain Madrid E)</name>
    <dbReference type="NCBI Taxonomy" id="272947"/>
    <lineage>
        <taxon>Bacteria</taxon>
        <taxon>Pseudomonadati</taxon>
        <taxon>Pseudomonadota</taxon>
        <taxon>Alphaproteobacteria</taxon>
        <taxon>Rickettsiales</taxon>
        <taxon>Rickettsiaceae</taxon>
        <taxon>Rickettsieae</taxon>
        <taxon>Rickettsia</taxon>
        <taxon>typhus group</taxon>
    </lineage>
</organism>
<dbReference type="EMBL" id="AJ235272">
    <property type="protein sequence ID" value="CAA15127.1"/>
    <property type="molecule type" value="Genomic_DNA"/>
</dbReference>
<dbReference type="PIR" id="E71675">
    <property type="entry name" value="E71675"/>
</dbReference>
<dbReference type="RefSeq" id="NP_221051.1">
    <property type="nucleotide sequence ID" value="NC_000963.1"/>
</dbReference>
<dbReference type="RefSeq" id="WP_010886348.1">
    <property type="nucleotide sequence ID" value="NC_000963.1"/>
</dbReference>
<dbReference type="SMR" id="Q9ZCN3"/>
<dbReference type="STRING" id="272947.gene:17555767"/>
<dbReference type="EnsemblBacteria" id="CAA15127">
    <property type="protein sequence ID" value="CAA15127"/>
    <property type="gene ID" value="CAA15127"/>
</dbReference>
<dbReference type="KEGG" id="rpr:RP690"/>
<dbReference type="PATRIC" id="fig|272947.5.peg.712"/>
<dbReference type="eggNOG" id="COG1322">
    <property type="taxonomic scope" value="Bacteria"/>
</dbReference>
<dbReference type="HOGENOM" id="CLU_640725_0_0_5"/>
<dbReference type="OrthoDB" id="370725at2"/>
<dbReference type="Proteomes" id="UP000002480">
    <property type="component" value="Chromosome"/>
</dbReference>
<dbReference type="GO" id="GO:0006310">
    <property type="term" value="P:DNA recombination"/>
    <property type="evidence" value="ECO:0007669"/>
    <property type="project" value="UniProtKB-KW"/>
</dbReference>
<dbReference type="InterPro" id="IPR003798">
    <property type="entry name" value="DNA_recombination_RmuC"/>
</dbReference>
<dbReference type="PANTHER" id="PTHR30563">
    <property type="entry name" value="DNA RECOMBINATION PROTEIN RMUC"/>
    <property type="match status" value="1"/>
</dbReference>
<dbReference type="PANTHER" id="PTHR30563:SF0">
    <property type="entry name" value="DNA RECOMBINATION PROTEIN RMUC"/>
    <property type="match status" value="1"/>
</dbReference>
<dbReference type="Pfam" id="PF02646">
    <property type="entry name" value="RmuC"/>
    <property type="match status" value="1"/>
</dbReference>
<keyword id="KW-0175">Coiled coil</keyword>
<keyword id="KW-0233">DNA recombination</keyword>
<keyword id="KW-1185">Reference proteome</keyword>
<feature type="chain" id="PRO_0000202050" description="DNA recombination protein RmuC homolog">
    <location>
        <begin position="1"/>
        <end position="426"/>
    </location>
</feature>
<feature type="coiled-coil region" evidence="2">
    <location>
        <begin position="25"/>
        <end position="85"/>
    </location>
</feature>
<evidence type="ECO:0000250" key="1"/>
<evidence type="ECO:0000255" key="2"/>
<evidence type="ECO:0000305" key="3"/>
<proteinExistence type="inferred from homology"/>
<accession>Q9ZCN3</accession>